<protein>
    <recommendedName>
        <fullName>Transposon Tn917 resolvase</fullName>
    </recommendedName>
</protein>
<gene>
    <name type="primary">tnpR</name>
</gene>
<organism>
    <name type="scientific">Enterococcus faecalis</name>
    <name type="common">Streptococcus faecalis</name>
    <dbReference type="NCBI Taxonomy" id="1351"/>
    <lineage>
        <taxon>Bacteria</taxon>
        <taxon>Bacillati</taxon>
        <taxon>Bacillota</taxon>
        <taxon>Bacilli</taxon>
        <taxon>Lactobacillales</taxon>
        <taxon>Enterococcaceae</taxon>
        <taxon>Enterococcus</taxon>
    </lineage>
</organism>
<evidence type="ECO:0000255" key="1"/>
<evidence type="ECO:0000255" key="2">
    <source>
        <dbReference type="PROSITE-ProRule" id="PRU01072"/>
    </source>
</evidence>
<evidence type="ECO:0000305" key="3"/>
<keyword id="KW-0229">DNA integration</keyword>
<keyword id="KW-0233">DNA recombination</keyword>
<keyword id="KW-0238">DNA-binding</keyword>
<keyword id="KW-0614">Plasmid</keyword>
<keyword id="KW-0814">Transposable element</keyword>
<name>TNR7_ENTFL</name>
<accession>P06693</accession>
<dbReference type="EMBL" id="M11180">
    <property type="protein sequence ID" value="AAA27454.2"/>
    <property type="molecule type" value="Genomic_DNA"/>
</dbReference>
<dbReference type="PIR" id="D25028">
    <property type="entry name" value="D25028"/>
</dbReference>
<dbReference type="RefSeq" id="WP_000576156.1">
    <property type="nucleotide sequence ID" value="NZ_WVTO01000015.1"/>
</dbReference>
<dbReference type="SMR" id="P06693"/>
<dbReference type="GO" id="GO:0003677">
    <property type="term" value="F:DNA binding"/>
    <property type="evidence" value="ECO:0007669"/>
    <property type="project" value="UniProtKB-KW"/>
</dbReference>
<dbReference type="GO" id="GO:0000150">
    <property type="term" value="F:DNA strand exchange activity"/>
    <property type="evidence" value="ECO:0007669"/>
    <property type="project" value="InterPro"/>
</dbReference>
<dbReference type="GO" id="GO:0015074">
    <property type="term" value="P:DNA integration"/>
    <property type="evidence" value="ECO:0007669"/>
    <property type="project" value="UniProtKB-KW"/>
</dbReference>
<dbReference type="CDD" id="cd03768">
    <property type="entry name" value="SR_ResInv"/>
    <property type="match status" value="1"/>
</dbReference>
<dbReference type="FunFam" id="3.40.50.1390:FF:000001">
    <property type="entry name" value="DNA recombinase"/>
    <property type="match status" value="1"/>
</dbReference>
<dbReference type="Gene3D" id="3.40.50.1390">
    <property type="entry name" value="Resolvase, N-terminal catalytic domain"/>
    <property type="match status" value="1"/>
</dbReference>
<dbReference type="InterPro" id="IPR006118">
    <property type="entry name" value="Recombinase_CS"/>
</dbReference>
<dbReference type="InterPro" id="IPR006119">
    <property type="entry name" value="Resolv_N"/>
</dbReference>
<dbReference type="InterPro" id="IPR036162">
    <property type="entry name" value="Resolvase-like_N_sf"/>
</dbReference>
<dbReference type="InterPro" id="IPR006120">
    <property type="entry name" value="Resolvase_HTH_dom"/>
</dbReference>
<dbReference type="InterPro" id="IPR050639">
    <property type="entry name" value="SSR_resolvase"/>
</dbReference>
<dbReference type="PANTHER" id="PTHR30461">
    <property type="entry name" value="DNA-INVERTASE FROM LAMBDOID PROPHAGE"/>
    <property type="match status" value="1"/>
</dbReference>
<dbReference type="PANTHER" id="PTHR30461:SF2">
    <property type="entry name" value="SERINE RECOMBINASE PINE-RELATED"/>
    <property type="match status" value="1"/>
</dbReference>
<dbReference type="Pfam" id="PF02796">
    <property type="entry name" value="HTH_7"/>
    <property type="match status" value="1"/>
</dbReference>
<dbReference type="Pfam" id="PF00239">
    <property type="entry name" value="Resolvase"/>
    <property type="match status" value="1"/>
</dbReference>
<dbReference type="SMART" id="SM00857">
    <property type="entry name" value="Resolvase"/>
    <property type="match status" value="1"/>
</dbReference>
<dbReference type="SUPFAM" id="SSF53041">
    <property type="entry name" value="Resolvase-like"/>
    <property type="match status" value="1"/>
</dbReference>
<dbReference type="PROSITE" id="PS00397">
    <property type="entry name" value="RECOMBINASES_1"/>
    <property type="match status" value="1"/>
</dbReference>
<dbReference type="PROSITE" id="PS00398">
    <property type="entry name" value="RECOMBINASES_2"/>
    <property type="match status" value="1"/>
</dbReference>
<dbReference type="PROSITE" id="PS51736">
    <property type="entry name" value="RECOMBINASES_3"/>
    <property type="match status" value="1"/>
</dbReference>
<proteinExistence type="inferred from homology"/>
<feature type="chain" id="PRO_0000196375" description="Transposon Tn917 resolvase">
    <location>
        <begin position="1"/>
        <end position="184"/>
    </location>
</feature>
<feature type="domain" description="Resolvase/invertase-type recombinase catalytic" evidence="2">
    <location>
        <begin position="1"/>
        <end position="134"/>
    </location>
</feature>
<feature type="DNA-binding region" description="H-T-H motif" evidence="1">
    <location>
        <begin position="161"/>
        <end position="180"/>
    </location>
</feature>
<feature type="active site" description="O-(5'-phospho-DNA)-serine intermediate" evidence="2">
    <location>
        <position position="9"/>
    </location>
</feature>
<geneLocation type="plasmid">
    <name>pAD2</name>
</geneLocation>
<reference key="1">
    <citation type="journal article" date="1985" name="J. Bacteriol.">
        <title>Complete nucleotide sequence of macrolide-lincosamide-streptogramin B-resistance transposon Tn917 in Streptococcus faecalis.</title>
        <authorList>
            <person name="Shaw J.H."/>
            <person name="Clewell D.B."/>
        </authorList>
    </citation>
    <scope>NUCLEOTIDE SEQUENCE [GENOMIC DNA]</scope>
    <source>
        <strain>DS16</strain>
        <plasmid>pAD2</plasmid>
        <transposon>Tn917</transposon>
    </source>
</reference>
<reference key="2">
    <citation type="submission" date="2002-06" db="EMBL/GenBank/DDBJ databases">
        <authorList>
            <person name="Flannagan S.E."/>
            <person name="Clewell D.B."/>
        </authorList>
    </citation>
    <scope>SEQUENCE REVISION TO C-TERMINUS</scope>
</reference>
<sequence>MIFGYARVSTDDQNLSLQIDALTHYGIDKLFQEKVTGAKKDRPQLEEMINLLREGDSVVIYKLDRISRSTKHLIELSELFEELSVNFISIQDNVDTSTSMGRFFFRVMASLAELERDIIIERTNSGLKAARVRGKKGGRPSKGKLSIDLALKMYDSKEYSIRQILDASKLSKTTFYRYLNKRNA</sequence>
<comment type="function">
    <text>Resolvase catalyzes the resolution (a site-specific recombination) of the cointegrated replicon to yield the final transposition products.</text>
</comment>
<comment type="similarity">
    <text evidence="3">Belongs to the site-specific recombinase resolvase family.</text>
</comment>